<gene>
    <name evidence="1" type="primary">rplR</name>
    <name type="ordered locus">STM3424</name>
</gene>
<proteinExistence type="inferred from homology"/>
<evidence type="ECO:0000255" key="1">
    <source>
        <dbReference type="HAMAP-Rule" id="MF_01337"/>
    </source>
</evidence>
<evidence type="ECO:0000305" key="2"/>
<feature type="chain" id="PRO_0000131337" description="Large ribosomal subunit protein uL18">
    <location>
        <begin position="1"/>
        <end position="117"/>
    </location>
</feature>
<organism>
    <name type="scientific">Salmonella typhimurium (strain LT2 / SGSC1412 / ATCC 700720)</name>
    <dbReference type="NCBI Taxonomy" id="99287"/>
    <lineage>
        <taxon>Bacteria</taxon>
        <taxon>Pseudomonadati</taxon>
        <taxon>Pseudomonadota</taxon>
        <taxon>Gammaproteobacteria</taxon>
        <taxon>Enterobacterales</taxon>
        <taxon>Enterobacteriaceae</taxon>
        <taxon>Salmonella</taxon>
    </lineage>
</organism>
<reference key="1">
    <citation type="journal article" date="2001" name="Nature">
        <title>Complete genome sequence of Salmonella enterica serovar Typhimurium LT2.</title>
        <authorList>
            <person name="McClelland M."/>
            <person name="Sanderson K.E."/>
            <person name="Spieth J."/>
            <person name="Clifton S.W."/>
            <person name="Latreille P."/>
            <person name="Courtney L."/>
            <person name="Porwollik S."/>
            <person name="Ali J."/>
            <person name="Dante M."/>
            <person name="Du F."/>
            <person name="Hou S."/>
            <person name="Layman D."/>
            <person name="Leonard S."/>
            <person name="Nguyen C."/>
            <person name="Scott K."/>
            <person name="Holmes A."/>
            <person name="Grewal N."/>
            <person name="Mulvaney E."/>
            <person name="Ryan E."/>
            <person name="Sun H."/>
            <person name="Florea L."/>
            <person name="Miller W."/>
            <person name="Stoneking T."/>
            <person name="Nhan M."/>
            <person name="Waterston R."/>
            <person name="Wilson R.K."/>
        </authorList>
    </citation>
    <scope>NUCLEOTIDE SEQUENCE [LARGE SCALE GENOMIC DNA]</scope>
    <source>
        <strain>LT2 / SGSC1412 / ATCC 700720</strain>
    </source>
</reference>
<comment type="function">
    <text evidence="1">This is one of the proteins that bind and probably mediate the attachment of the 5S RNA into the large ribosomal subunit, where it forms part of the central protuberance.</text>
</comment>
<comment type="subunit">
    <text evidence="1">Part of the 50S ribosomal subunit; part of the 5S rRNA/L5/L18/L25 subcomplex. Contacts the 5S and 23S rRNAs.</text>
</comment>
<comment type="similarity">
    <text evidence="1">Belongs to the universal ribosomal protein uL18 family.</text>
</comment>
<name>RL18_SALTY</name>
<dbReference type="EMBL" id="AE006468">
    <property type="protein sequence ID" value="AAL22287.1"/>
    <property type="molecule type" value="Genomic_DNA"/>
</dbReference>
<dbReference type="RefSeq" id="NP_462328.1">
    <property type="nucleotide sequence ID" value="NC_003197.2"/>
</dbReference>
<dbReference type="RefSeq" id="WP_000358956.1">
    <property type="nucleotide sequence ID" value="NC_003197.2"/>
</dbReference>
<dbReference type="SMR" id="Q7CPL6"/>
<dbReference type="STRING" id="99287.STM3424"/>
<dbReference type="PaxDb" id="99287-STM3424"/>
<dbReference type="GeneID" id="1254947"/>
<dbReference type="GeneID" id="93035747"/>
<dbReference type="KEGG" id="stm:STM3424"/>
<dbReference type="PATRIC" id="fig|99287.12.peg.3621"/>
<dbReference type="HOGENOM" id="CLU_098841_0_1_6"/>
<dbReference type="OMA" id="NKQIYAQ"/>
<dbReference type="PhylomeDB" id="Q7CPL6"/>
<dbReference type="BioCyc" id="SENT99287:STM3424-MONOMER"/>
<dbReference type="PRO" id="PR:Q7CPL6"/>
<dbReference type="Proteomes" id="UP000001014">
    <property type="component" value="Chromosome"/>
</dbReference>
<dbReference type="GO" id="GO:0022625">
    <property type="term" value="C:cytosolic large ribosomal subunit"/>
    <property type="evidence" value="ECO:0000318"/>
    <property type="project" value="GO_Central"/>
</dbReference>
<dbReference type="GO" id="GO:0008097">
    <property type="term" value="F:5S rRNA binding"/>
    <property type="evidence" value="ECO:0000318"/>
    <property type="project" value="GO_Central"/>
</dbReference>
<dbReference type="GO" id="GO:0003735">
    <property type="term" value="F:structural constituent of ribosome"/>
    <property type="evidence" value="ECO:0007669"/>
    <property type="project" value="InterPro"/>
</dbReference>
<dbReference type="GO" id="GO:0006412">
    <property type="term" value="P:translation"/>
    <property type="evidence" value="ECO:0007669"/>
    <property type="project" value="UniProtKB-UniRule"/>
</dbReference>
<dbReference type="CDD" id="cd00432">
    <property type="entry name" value="Ribosomal_L18_L5e"/>
    <property type="match status" value="1"/>
</dbReference>
<dbReference type="FunFam" id="3.30.420.100:FF:000001">
    <property type="entry name" value="50S ribosomal protein L18"/>
    <property type="match status" value="1"/>
</dbReference>
<dbReference type="Gene3D" id="3.30.420.100">
    <property type="match status" value="1"/>
</dbReference>
<dbReference type="HAMAP" id="MF_01337_B">
    <property type="entry name" value="Ribosomal_uL18_B"/>
    <property type="match status" value="1"/>
</dbReference>
<dbReference type="InterPro" id="IPR004389">
    <property type="entry name" value="Ribosomal_uL18_bac-type"/>
</dbReference>
<dbReference type="InterPro" id="IPR005484">
    <property type="entry name" value="Ribosomal_uL18_bac/euk"/>
</dbReference>
<dbReference type="NCBIfam" id="TIGR00060">
    <property type="entry name" value="L18_bact"/>
    <property type="match status" value="1"/>
</dbReference>
<dbReference type="PANTHER" id="PTHR12899">
    <property type="entry name" value="39S RIBOSOMAL PROTEIN L18, MITOCHONDRIAL"/>
    <property type="match status" value="1"/>
</dbReference>
<dbReference type="PANTHER" id="PTHR12899:SF3">
    <property type="entry name" value="LARGE RIBOSOMAL SUBUNIT PROTEIN UL18M"/>
    <property type="match status" value="1"/>
</dbReference>
<dbReference type="Pfam" id="PF00861">
    <property type="entry name" value="Ribosomal_L18p"/>
    <property type="match status" value="1"/>
</dbReference>
<dbReference type="SUPFAM" id="SSF53137">
    <property type="entry name" value="Translational machinery components"/>
    <property type="match status" value="1"/>
</dbReference>
<protein>
    <recommendedName>
        <fullName evidence="1">Large ribosomal subunit protein uL18</fullName>
    </recommendedName>
    <alternativeName>
        <fullName evidence="2">50S ribosomal protein L18</fullName>
    </alternativeName>
</protein>
<accession>Q7CPL6</accession>
<keyword id="KW-1185">Reference proteome</keyword>
<keyword id="KW-0687">Ribonucleoprotein</keyword>
<keyword id="KW-0689">Ribosomal protein</keyword>
<keyword id="KW-0694">RNA-binding</keyword>
<keyword id="KW-0699">rRNA-binding</keyword>
<sequence>MDKKSARIRRATRARRKLKELGATRLVVHRTPRHIYAQVIAPNGSEVLVAASTVEKAIAEQLKYTGNKDAAAAVGKAVAERALEKGIKDVSFDRSGFQYHGRVQALADAAREAGLQF</sequence>